<comment type="function">
    <text evidence="1">Required for rescue of stalled ribosomes mediated by trans-translation. Binds to transfer-messenger RNA (tmRNA), required for stable association of tmRNA with ribosomes. tmRNA and SmpB together mimic tRNA shape, replacing the anticodon stem-loop with SmpB. tmRNA is encoded by the ssrA gene; the 2 termini fold to resemble tRNA(Ala) and it encodes a 'tag peptide', a short internal open reading frame. During trans-translation Ala-aminoacylated tmRNA acts like a tRNA, entering the A-site of stalled ribosomes, displacing the stalled mRNA. The ribosome then switches to translate the ORF on the tmRNA; the nascent peptide is terminated with the 'tag peptide' encoded by the tmRNA and targeted for degradation. The ribosome is freed to recommence translation, which seems to be the essential function of trans-translation.</text>
</comment>
<comment type="subcellular location">
    <subcellularLocation>
        <location evidence="1">Cytoplasm</location>
    </subcellularLocation>
    <text evidence="1">The tmRNA-SmpB complex associates with stalled 70S ribosomes.</text>
</comment>
<comment type="similarity">
    <text evidence="1">Belongs to the SmpB family.</text>
</comment>
<dbReference type="EMBL" id="CP000909">
    <property type="protein sequence ID" value="ABY36504.1"/>
    <property type="molecule type" value="Genomic_DNA"/>
</dbReference>
<dbReference type="RefSeq" id="WP_012259157.1">
    <property type="nucleotide sequence ID" value="NC_010175.1"/>
</dbReference>
<dbReference type="RefSeq" id="YP_001636893.1">
    <property type="nucleotide sequence ID" value="NC_010175.1"/>
</dbReference>
<dbReference type="SMR" id="A9WJ45"/>
<dbReference type="FunCoup" id="A9WJ45">
    <property type="interactions" value="336"/>
</dbReference>
<dbReference type="STRING" id="324602.Caur_3317"/>
<dbReference type="EnsemblBacteria" id="ABY36504">
    <property type="protein sequence ID" value="ABY36504"/>
    <property type="gene ID" value="Caur_3317"/>
</dbReference>
<dbReference type="KEGG" id="cau:Caur_3317"/>
<dbReference type="PATRIC" id="fig|324602.8.peg.3736"/>
<dbReference type="eggNOG" id="COG0691">
    <property type="taxonomic scope" value="Bacteria"/>
</dbReference>
<dbReference type="HOGENOM" id="CLU_108953_0_0_0"/>
<dbReference type="InParanoid" id="A9WJ45"/>
<dbReference type="Proteomes" id="UP000002008">
    <property type="component" value="Chromosome"/>
</dbReference>
<dbReference type="GO" id="GO:0005829">
    <property type="term" value="C:cytosol"/>
    <property type="evidence" value="ECO:0000318"/>
    <property type="project" value="GO_Central"/>
</dbReference>
<dbReference type="GO" id="GO:0003723">
    <property type="term" value="F:RNA binding"/>
    <property type="evidence" value="ECO:0000318"/>
    <property type="project" value="GO_Central"/>
</dbReference>
<dbReference type="GO" id="GO:0070929">
    <property type="term" value="P:trans-translation"/>
    <property type="evidence" value="ECO:0007669"/>
    <property type="project" value="UniProtKB-UniRule"/>
</dbReference>
<dbReference type="CDD" id="cd09294">
    <property type="entry name" value="SmpB"/>
    <property type="match status" value="1"/>
</dbReference>
<dbReference type="Gene3D" id="2.40.280.10">
    <property type="match status" value="1"/>
</dbReference>
<dbReference type="HAMAP" id="MF_00023">
    <property type="entry name" value="SmpB"/>
    <property type="match status" value="1"/>
</dbReference>
<dbReference type="InterPro" id="IPR023620">
    <property type="entry name" value="SmpB"/>
</dbReference>
<dbReference type="InterPro" id="IPR000037">
    <property type="entry name" value="SsrA-bd_prot"/>
</dbReference>
<dbReference type="InterPro" id="IPR020081">
    <property type="entry name" value="SsrA-bd_prot_CS"/>
</dbReference>
<dbReference type="NCBIfam" id="NF003843">
    <property type="entry name" value="PRK05422.1"/>
    <property type="match status" value="1"/>
</dbReference>
<dbReference type="NCBIfam" id="TIGR00086">
    <property type="entry name" value="smpB"/>
    <property type="match status" value="1"/>
</dbReference>
<dbReference type="PANTHER" id="PTHR30308:SF2">
    <property type="entry name" value="SSRA-BINDING PROTEIN"/>
    <property type="match status" value="1"/>
</dbReference>
<dbReference type="PANTHER" id="PTHR30308">
    <property type="entry name" value="TMRNA-BINDING COMPONENT OF TRANS-TRANSLATION TAGGING COMPLEX"/>
    <property type="match status" value="1"/>
</dbReference>
<dbReference type="Pfam" id="PF01668">
    <property type="entry name" value="SmpB"/>
    <property type="match status" value="1"/>
</dbReference>
<dbReference type="SUPFAM" id="SSF74982">
    <property type="entry name" value="Small protein B (SmpB)"/>
    <property type="match status" value="1"/>
</dbReference>
<dbReference type="PROSITE" id="PS01317">
    <property type="entry name" value="SSRP"/>
    <property type="match status" value="1"/>
</dbReference>
<feature type="chain" id="PRO_0000331031" description="SsrA-binding protein">
    <location>
        <begin position="1"/>
        <end position="160"/>
    </location>
</feature>
<protein>
    <recommendedName>
        <fullName evidence="1">SsrA-binding protein</fullName>
    </recommendedName>
    <alternativeName>
        <fullName evidence="1">Small protein B</fullName>
    </alternativeName>
</protein>
<accession>A9WJ45</accession>
<reference key="1">
    <citation type="journal article" date="2011" name="BMC Genomics">
        <title>Complete genome sequence of the filamentous anoxygenic phototrophic bacterium Chloroflexus aurantiacus.</title>
        <authorList>
            <person name="Tang K.H."/>
            <person name="Barry K."/>
            <person name="Chertkov O."/>
            <person name="Dalin E."/>
            <person name="Han C.S."/>
            <person name="Hauser L.J."/>
            <person name="Honchak B.M."/>
            <person name="Karbach L.E."/>
            <person name="Land M.L."/>
            <person name="Lapidus A."/>
            <person name="Larimer F.W."/>
            <person name="Mikhailova N."/>
            <person name="Pitluck S."/>
            <person name="Pierson B.K."/>
            <person name="Blankenship R.E."/>
        </authorList>
    </citation>
    <scope>NUCLEOTIDE SEQUENCE [LARGE SCALE GENOMIC DNA]</scope>
    <source>
        <strain>ATCC 29366 / DSM 635 / J-10-fl</strain>
    </source>
</reference>
<name>SSRP_CHLAA</name>
<organism>
    <name type="scientific">Chloroflexus aurantiacus (strain ATCC 29366 / DSM 635 / J-10-fl)</name>
    <dbReference type="NCBI Taxonomy" id="324602"/>
    <lineage>
        <taxon>Bacteria</taxon>
        <taxon>Bacillati</taxon>
        <taxon>Chloroflexota</taxon>
        <taxon>Chloroflexia</taxon>
        <taxon>Chloroflexales</taxon>
        <taxon>Chloroflexineae</taxon>
        <taxon>Chloroflexaceae</taxon>
        <taxon>Chloroflexus</taxon>
    </lineage>
</organism>
<keyword id="KW-0963">Cytoplasm</keyword>
<keyword id="KW-1185">Reference proteome</keyword>
<keyword id="KW-0694">RNA-binding</keyword>
<sequence length="160" mass="18483">MTATKHKHPGVVAENRKARHDYDIEETIEAGIVLSGSEIKSVRAGRVNLRGSFARVIDDEVFLYDAHIAPYEQSGKYFNHDPMRPRKLLLHRREINRLNGLVRMKGMTLVPLKVYFKGRRAKVELGVARGKKIYDKREDIARRDAARDIDRALKRARHDL</sequence>
<proteinExistence type="inferred from homology"/>
<evidence type="ECO:0000255" key="1">
    <source>
        <dbReference type="HAMAP-Rule" id="MF_00023"/>
    </source>
</evidence>
<gene>
    <name evidence="1" type="primary">smpB</name>
    <name type="ordered locus">Caur_3317</name>
</gene>